<accession>Q5M1G8</accession>
<organism>
    <name type="scientific">Streptococcus thermophilus (strain CNRZ 1066)</name>
    <dbReference type="NCBI Taxonomy" id="299768"/>
    <lineage>
        <taxon>Bacteria</taxon>
        <taxon>Bacillati</taxon>
        <taxon>Bacillota</taxon>
        <taxon>Bacilli</taxon>
        <taxon>Lactobacillales</taxon>
        <taxon>Streptococcaceae</taxon>
        <taxon>Streptococcus</taxon>
    </lineage>
</organism>
<evidence type="ECO:0000255" key="1">
    <source>
        <dbReference type="HAMAP-Rule" id="MF_00739"/>
    </source>
</evidence>
<sequence length="100" mass="11299">MQLTMREQEKMMISLAAMIAQRRKDKGIKLNHPEAVALITDYVLEGAREGKTVAQLMDEARNLLTREDVMEGIAEMIPMIQVEATFTDSTKLVTVHDPIQ</sequence>
<reference key="1">
    <citation type="journal article" date="2004" name="Nat. Biotechnol.">
        <title>Complete sequence and comparative genome analysis of the dairy bacterium Streptococcus thermophilus.</title>
        <authorList>
            <person name="Bolotin A."/>
            <person name="Quinquis B."/>
            <person name="Renault P."/>
            <person name="Sorokin A."/>
            <person name="Ehrlich S.D."/>
            <person name="Kulakauskas S."/>
            <person name="Lapidus A."/>
            <person name="Goltsman E."/>
            <person name="Mazur M."/>
            <person name="Pusch G.D."/>
            <person name="Fonstein M."/>
            <person name="Overbeek R."/>
            <person name="Kyprides N."/>
            <person name="Purnelle B."/>
            <person name="Prozzi D."/>
            <person name="Ngui K."/>
            <person name="Masuy D."/>
            <person name="Hancy F."/>
            <person name="Burteau S."/>
            <person name="Boutry M."/>
            <person name="Delcour J."/>
            <person name="Goffeau A."/>
            <person name="Hols P."/>
        </authorList>
    </citation>
    <scope>NUCLEOTIDE SEQUENCE [LARGE SCALE GENOMIC DNA]</scope>
    <source>
        <strain>CNRZ 1066</strain>
    </source>
</reference>
<comment type="catalytic activity">
    <reaction evidence="1">
        <text>urea + 2 H2O + H(+) = hydrogencarbonate + 2 NH4(+)</text>
        <dbReference type="Rhea" id="RHEA:20557"/>
        <dbReference type="ChEBI" id="CHEBI:15377"/>
        <dbReference type="ChEBI" id="CHEBI:15378"/>
        <dbReference type="ChEBI" id="CHEBI:16199"/>
        <dbReference type="ChEBI" id="CHEBI:17544"/>
        <dbReference type="ChEBI" id="CHEBI:28938"/>
        <dbReference type="EC" id="3.5.1.5"/>
    </reaction>
</comment>
<comment type="pathway">
    <text evidence="1">Nitrogen metabolism; urea degradation; CO(2) and NH(3) from urea (urease route): step 1/1.</text>
</comment>
<comment type="subunit">
    <text evidence="1">Heterotrimer of UreA (gamma), UreB (beta) and UreC (alpha) subunits. Three heterotrimers associate to form the active enzyme.</text>
</comment>
<comment type="subcellular location">
    <subcellularLocation>
        <location evidence="1">Cytoplasm</location>
    </subcellularLocation>
</comment>
<comment type="similarity">
    <text evidence="1">Belongs to the urease gamma subunit family.</text>
</comment>
<keyword id="KW-0963">Cytoplasm</keyword>
<keyword id="KW-0378">Hydrolase</keyword>
<name>URE3_STRT1</name>
<proteinExistence type="inferred from homology"/>
<feature type="chain" id="PRO_0000234218" description="Urease subunit gamma">
    <location>
        <begin position="1"/>
        <end position="100"/>
    </location>
</feature>
<gene>
    <name evidence="1" type="primary">ureA</name>
    <name type="ordered locus">str0281</name>
</gene>
<dbReference type="EC" id="3.5.1.5" evidence="1"/>
<dbReference type="EMBL" id="CP000024">
    <property type="protein sequence ID" value="AAV61893.1"/>
    <property type="molecule type" value="Genomic_DNA"/>
</dbReference>
<dbReference type="RefSeq" id="WP_002886558.1">
    <property type="nucleotide sequence ID" value="NC_006449.1"/>
</dbReference>
<dbReference type="SMR" id="Q5M1G8"/>
<dbReference type="KEGG" id="stc:str0281"/>
<dbReference type="HOGENOM" id="CLU_145825_1_0_9"/>
<dbReference type="UniPathway" id="UPA00258">
    <property type="reaction ID" value="UER00370"/>
</dbReference>
<dbReference type="GO" id="GO:0005737">
    <property type="term" value="C:cytoplasm"/>
    <property type="evidence" value="ECO:0007669"/>
    <property type="project" value="UniProtKB-SubCell"/>
</dbReference>
<dbReference type="GO" id="GO:0016151">
    <property type="term" value="F:nickel cation binding"/>
    <property type="evidence" value="ECO:0007669"/>
    <property type="project" value="InterPro"/>
</dbReference>
<dbReference type="GO" id="GO:0009039">
    <property type="term" value="F:urease activity"/>
    <property type="evidence" value="ECO:0007669"/>
    <property type="project" value="UniProtKB-UniRule"/>
</dbReference>
<dbReference type="GO" id="GO:0043419">
    <property type="term" value="P:urea catabolic process"/>
    <property type="evidence" value="ECO:0007669"/>
    <property type="project" value="UniProtKB-UniRule"/>
</dbReference>
<dbReference type="CDD" id="cd00390">
    <property type="entry name" value="Urease_gamma"/>
    <property type="match status" value="1"/>
</dbReference>
<dbReference type="Gene3D" id="3.30.280.10">
    <property type="entry name" value="Urease, gamma-like subunit"/>
    <property type="match status" value="1"/>
</dbReference>
<dbReference type="HAMAP" id="MF_00739">
    <property type="entry name" value="Urease_gamma"/>
    <property type="match status" value="1"/>
</dbReference>
<dbReference type="InterPro" id="IPR012010">
    <property type="entry name" value="Urease_gamma"/>
</dbReference>
<dbReference type="InterPro" id="IPR002026">
    <property type="entry name" value="Urease_gamma/gamma-beta_su"/>
</dbReference>
<dbReference type="InterPro" id="IPR036463">
    <property type="entry name" value="Urease_gamma_sf"/>
</dbReference>
<dbReference type="InterPro" id="IPR050069">
    <property type="entry name" value="Urease_subunit"/>
</dbReference>
<dbReference type="NCBIfam" id="NF009712">
    <property type="entry name" value="PRK13241.1"/>
    <property type="match status" value="1"/>
</dbReference>
<dbReference type="NCBIfam" id="TIGR00193">
    <property type="entry name" value="urease_gam"/>
    <property type="match status" value="1"/>
</dbReference>
<dbReference type="PANTHER" id="PTHR33569">
    <property type="entry name" value="UREASE"/>
    <property type="match status" value="1"/>
</dbReference>
<dbReference type="PANTHER" id="PTHR33569:SF1">
    <property type="entry name" value="UREASE"/>
    <property type="match status" value="1"/>
</dbReference>
<dbReference type="Pfam" id="PF00547">
    <property type="entry name" value="Urease_gamma"/>
    <property type="match status" value="1"/>
</dbReference>
<dbReference type="PIRSF" id="PIRSF001223">
    <property type="entry name" value="Urease_gamma"/>
    <property type="match status" value="1"/>
</dbReference>
<dbReference type="SUPFAM" id="SSF54111">
    <property type="entry name" value="Urease, gamma-subunit"/>
    <property type="match status" value="1"/>
</dbReference>
<protein>
    <recommendedName>
        <fullName evidence="1">Urease subunit gamma</fullName>
        <ecNumber evidence="1">3.5.1.5</ecNumber>
    </recommendedName>
    <alternativeName>
        <fullName evidence="1">Urea amidohydrolase subunit gamma</fullName>
    </alternativeName>
</protein>